<evidence type="ECO:0000255" key="1">
    <source>
        <dbReference type="HAMAP-Rule" id="MF_01553"/>
    </source>
</evidence>
<dbReference type="EC" id="2.7.7.6" evidence="1"/>
<dbReference type="EMBL" id="CP000764">
    <property type="protein sequence ID" value="ABS22912.1"/>
    <property type="molecule type" value="Genomic_DNA"/>
</dbReference>
<dbReference type="RefSeq" id="WP_012095134.1">
    <property type="nucleotide sequence ID" value="NC_009674.1"/>
</dbReference>
<dbReference type="SMR" id="A7GS04"/>
<dbReference type="STRING" id="315749.Bcer98_2678"/>
<dbReference type="GeneID" id="33897933"/>
<dbReference type="KEGG" id="bcy:Bcer98_2678"/>
<dbReference type="eggNOG" id="COG5503">
    <property type="taxonomic scope" value="Bacteria"/>
</dbReference>
<dbReference type="HOGENOM" id="CLU_187518_0_0_9"/>
<dbReference type="OrthoDB" id="2147503at2"/>
<dbReference type="Proteomes" id="UP000002300">
    <property type="component" value="Chromosome"/>
</dbReference>
<dbReference type="GO" id="GO:0000428">
    <property type="term" value="C:DNA-directed RNA polymerase complex"/>
    <property type="evidence" value="ECO:0007669"/>
    <property type="project" value="UniProtKB-KW"/>
</dbReference>
<dbReference type="GO" id="GO:0003677">
    <property type="term" value="F:DNA binding"/>
    <property type="evidence" value="ECO:0007669"/>
    <property type="project" value="UniProtKB-UniRule"/>
</dbReference>
<dbReference type="GO" id="GO:0003899">
    <property type="term" value="F:DNA-directed RNA polymerase activity"/>
    <property type="evidence" value="ECO:0007669"/>
    <property type="project" value="UniProtKB-UniRule"/>
</dbReference>
<dbReference type="GO" id="GO:0006351">
    <property type="term" value="P:DNA-templated transcription"/>
    <property type="evidence" value="ECO:0007669"/>
    <property type="project" value="UniProtKB-UniRule"/>
</dbReference>
<dbReference type="Gene3D" id="3.10.20.730">
    <property type="entry name" value="RNAP, epsilon subunit-like"/>
    <property type="match status" value="1"/>
</dbReference>
<dbReference type="HAMAP" id="MF_01553">
    <property type="entry name" value="RNApol_bact_RpoY"/>
    <property type="match status" value="1"/>
</dbReference>
<dbReference type="InterPro" id="IPR009907">
    <property type="entry name" value="RpoY"/>
</dbReference>
<dbReference type="NCBIfam" id="NF010188">
    <property type="entry name" value="PRK13667.1"/>
    <property type="match status" value="1"/>
</dbReference>
<dbReference type="Pfam" id="PF07288">
    <property type="entry name" value="RpoY"/>
    <property type="match status" value="1"/>
</dbReference>
<sequence length="70" mass="8287">MIFKVFYQEKMTEVPVRENTKVLYLEADSERDVRAKLKKFAYNIEFVQSVTGAHLEYEKQNADLKLTEIV</sequence>
<name>RPOY_BACCN</name>
<feature type="chain" id="PRO_1000087752" description="DNA-directed RNA polymerase subunit epsilon">
    <location>
        <begin position="1"/>
        <end position="70"/>
    </location>
</feature>
<comment type="function">
    <text evidence="1">A non-essential component of RNA polymerase (RNAP).</text>
</comment>
<comment type="catalytic activity">
    <reaction evidence="1">
        <text>RNA(n) + a ribonucleoside 5'-triphosphate = RNA(n+1) + diphosphate</text>
        <dbReference type="Rhea" id="RHEA:21248"/>
        <dbReference type="Rhea" id="RHEA-COMP:14527"/>
        <dbReference type="Rhea" id="RHEA-COMP:17342"/>
        <dbReference type="ChEBI" id="CHEBI:33019"/>
        <dbReference type="ChEBI" id="CHEBI:61557"/>
        <dbReference type="ChEBI" id="CHEBI:140395"/>
        <dbReference type="EC" id="2.7.7.6"/>
    </reaction>
</comment>
<comment type="subunit">
    <text evidence="1">RNAP is composed of a core of 2 alpha, a beta and a beta' subunit. The core is associated with a delta subunit, and at least one of epsilon or omega. When a sigma factor is associated with the core the holoenzyme is formed, which can initiate transcription.</text>
</comment>
<comment type="similarity">
    <text evidence="1">Belongs to the RNA polymerase subunit epsilon family.</text>
</comment>
<gene>
    <name evidence="1" type="primary">rpoY</name>
    <name type="ordered locus">Bcer98_2678</name>
</gene>
<organism>
    <name type="scientific">Bacillus cytotoxicus (strain DSM 22905 / CIP 110041 / 391-98 / NVH 391-98)</name>
    <dbReference type="NCBI Taxonomy" id="315749"/>
    <lineage>
        <taxon>Bacteria</taxon>
        <taxon>Bacillati</taxon>
        <taxon>Bacillota</taxon>
        <taxon>Bacilli</taxon>
        <taxon>Bacillales</taxon>
        <taxon>Bacillaceae</taxon>
        <taxon>Bacillus</taxon>
        <taxon>Bacillus cereus group</taxon>
    </lineage>
</organism>
<keyword id="KW-0240">DNA-directed RNA polymerase</keyword>
<keyword id="KW-0548">Nucleotidyltransferase</keyword>
<keyword id="KW-0804">Transcription</keyword>
<keyword id="KW-0808">Transferase</keyword>
<protein>
    <recommendedName>
        <fullName evidence="1">DNA-directed RNA polymerase subunit epsilon</fullName>
        <shortName evidence="1">RNAP epsilon subunit</shortName>
        <ecNumber evidence="1">2.7.7.6</ecNumber>
    </recommendedName>
    <alternativeName>
        <fullName evidence="1">RNA polymerase epsilon subunit</fullName>
    </alternativeName>
    <alternativeName>
        <fullName evidence="1">Transcriptase subunit epsilon</fullName>
    </alternativeName>
</protein>
<proteinExistence type="inferred from homology"/>
<reference key="1">
    <citation type="journal article" date="2008" name="Chem. Biol. Interact.">
        <title>Extending the Bacillus cereus group genomics to putative food-borne pathogens of different toxicity.</title>
        <authorList>
            <person name="Lapidus A."/>
            <person name="Goltsman E."/>
            <person name="Auger S."/>
            <person name="Galleron N."/>
            <person name="Segurens B."/>
            <person name="Dossat C."/>
            <person name="Land M.L."/>
            <person name="Broussolle V."/>
            <person name="Brillard J."/>
            <person name="Guinebretiere M.-H."/>
            <person name="Sanchis V."/>
            <person name="Nguen-the C."/>
            <person name="Lereclus D."/>
            <person name="Richardson P."/>
            <person name="Wincker P."/>
            <person name="Weissenbach J."/>
            <person name="Ehrlich S.D."/>
            <person name="Sorokin A."/>
        </authorList>
    </citation>
    <scope>NUCLEOTIDE SEQUENCE [LARGE SCALE GENOMIC DNA]</scope>
    <source>
        <strain>DSM 22905 / CIP 110041 / 391-98 / NVH 391-98</strain>
    </source>
</reference>
<accession>A7GS04</accession>